<organismHost>
    <name type="scientific">Aves</name>
    <dbReference type="NCBI Taxonomy" id="8782"/>
</organismHost>
<keyword id="KW-0025">Alternative splicing</keyword>
<keyword id="KW-1262">Eukaryotic host gene expression shutoff by virus</keyword>
<keyword id="KW-1035">Host cytoplasm</keyword>
<keyword id="KW-1190">Host gene expression shutoff by virus</keyword>
<keyword id="KW-1192">Host mRNA suppression by virus</keyword>
<keyword id="KW-1048">Host nucleus</keyword>
<keyword id="KW-0945">Host-virus interaction</keyword>
<keyword id="KW-1090">Inhibition of host innate immune response by virus</keyword>
<keyword id="KW-1114">Inhibition of host interferon signaling pathway by virus</keyword>
<keyword id="KW-1102">Inhibition of host PKR by virus</keyword>
<keyword id="KW-1103">Inhibition of host pre-mRNA processing by virus</keyword>
<keyword id="KW-1088">Inhibition of host RIG-I by virus</keyword>
<keyword id="KW-1113">Inhibition of host RLR pathway by virus</keyword>
<keyword id="KW-0922">Interferon antiviral system evasion</keyword>
<keyword id="KW-0694">RNA-binding</keyword>
<keyword id="KW-0832">Ubl conjugation</keyword>
<keyword id="KW-0899">Viral immunoevasion</keyword>
<evidence type="ECO:0000255" key="1">
    <source>
        <dbReference type="HAMAP-Rule" id="MF_04066"/>
    </source>
</evidence>
<evidence type="ECO:0000256" key="2">
    <source>
        <dbReference type="SAM" id="MobiDB-lite"/>
    </source>
</evidence>
<name>NS1_I71A2</name>
<protein>
    <recommendedName>
        <fullName evidence="1">Non-structural protein 1</fullName>
        <shortName evidence="1">NS1</shortName>
    </recommendedName>
    <alternativeName>
        <fullName evidence="1">NS1A</fullName>
    </alternativeName>
</protein>
<reference key="1">
    <citation type="journal article" date="1998" name="Virus Res.">
        <title>Multiple alignment comparison of the non-structural genes of influenza A viruses.</title>
        <authorList>
            <person name="Suarez D.L."/>
            <person name="Perdue M.L."/>
        </authorList>
    </citation>
    <scope>NUCLEOTIDE SEQUENCE [GENOMIC RNA]</scope>
</reference>
<reference key="2">
    <citation type="journal article" date="1987" name="Virology">
        <title>Infectious influenza A and B virus variants with long carboxyl terminal deletions in the NS1 polypeptides.</title>
        <authorList>
            <person name="Norton G.P."/>
            <person name="Tanaka T."/>
            <person name="Tobita K."/>
            <person name="Nakada S."/>
            <person name="Buonagurio D.A."/>
            <person name="Greenspan D."/>
            <person name="Krystal M."/>
            <person name="Palese P."/>
        </authorList>
    </citation>
    <scope>NUCLEOTIDE SEQUENCE [GENOMIC RNA] OF 1-117</scope>
</reference>
<reference key="3">
    <citation type="journal article" date="2003" name="Virology">
        <title>Intracellular warfare between human influenza viruses and human cells: the roles of the viral NS1 protein.</title>
        <authorList>
            <person name="Krug R.M."/>
            <person name="Yuan W."/>
            <person name="Noah D.L."/>
            <person name="Latham A.G."/>
        </authorList>
    </citation>
    <scope>REVIEW</scope>
</reference>
<sequence>MDSNTITSFQVDCYLWHIRKLLSMRDMCDAPFDDRLRRDQKALKGRGSTLGLDLRVATMEGKKIVEDILKSETDENLKIAIASSPAPRYITDMSIEEISREWYMLMPRQKITGGLMVKMDQAIMDKRITLKANFSVLFDQLETLVSLRAFTDDGAIVAEISPIPSMPGHSTEDVKNAIGILIGGLEWNDNSIRASENIQRFAWGIRDENGGPPLPPKQKRYMARRVESEV</sequence>
<proteinExistence type="inferred from homology"/>
<dbReference type="EMBL" id="U96740">
    <property type="protein sequence ID" value="AAB93939.1"/>
    <property type="molecule type" value="Genomic_RNA"/>
</dbReference>
<dbReference type="EMBL" id="M16623">
    <property type="protein sequence ID" value="AAA43551.1"/>
    <property type="molecule type" value="Genomic_RNA"/>
</dbReference>
<dbReference type="SMR" id="P08276"/>
<dbReference type="GO" id="GO:0030430">
    <property type="term" value="C:host cell cytoplasm"/>
    <property type="evidence" value="ECO:0007669"/>
    <property type="project" value="UniProtKB-SubCell"/>
</dbReference>
<dbReference type="GO" id="GO:0042025">
    <property type="term" value="C:host cell nucleus"/>
    <property type="evidence" value="ECO:0007669"/>
    <property type="project" value="UniProtKB-SubCell"/>
</dbReference>
<dbReference type="GO" id="GO:0030291">
    <property type="term" value="F:protein serine/threonine kinase inhibitor activity"/>
    <property type="evidence" value="ECO:0007669"/>
    <property type="project" value="UniProtKB-KW"/>
</dbReference>
<dbReference type="GO" id="GO:0003723">
    <property type="term" value="F:RNA binding"/>
    <property type="evidence" value="ECO:0007669"/>
    <property type="project" value="UniProtKB-KW"/>
</dbReference>
<dbReference type="GO" id="GO:0039540">
    <property type="term" value="P:symbiont-mediated suppression of host cytoplasmic pattern recognition receptor signaling pathway via inhibition of RIG-I activity"/>
    <property type="evidence" value="ECO:0007669"/>
    <property type="project" value="UniProtKB-KW"/>
</dbReference>
<dbReference type="GO" id="GO:0039657">
    <property type="term" value="P:symbiont-mediated suppression of host gene expression"/>
    <property type="evidence" value="ECO:0007669"/>
    <property type="project" value="UniProtKB-KW"/>
</dbReference>
<dbReference type="GO" id="GO:0039524">
    <property type="term" value="P:symbiont-mediated suppression of host mRNA processing"/>
    <property type="evidence" value="ECO:0007669"/>
    <property type="project" value="UniProtKB-KW"/>
</dbReference>
<dbReference type="GO" id="GO:0039580">
    <property type="term" value="P:symbiont-mediated suppression of host PKR/eIFalpha signaling"/>
    <property type="evidence" value="ECO:0007669"/>
    <property type="project" value="UniProtKB-KW"/>
</dbReference>
<dbReference type="GO" id="GO:0039502">
    <property type="term" value="P:symbiont-mediated suppression of host type I interferon-mediated signaling pathway"/>
    <property type="evidence" value="ECO:0007669"/>
    <property type="project" value="UniProtKB-KW"/>
</dbReference>
<dbReference type="Gene3D" id="3.30.420.330">
    <property type="entry name" value="Influenza virus non-structural protein, effector domain"/>
    <property type="match status" value="1"/>
</dbReference>
<dbReference type="Gene3D" id="1.10.287.10">
    <property type="entry name" value="S15/NS1, RNA-binding"/>
    <property type="match status" value="1"/>
</dbReference>
<dbReference type="HAMAP" id="MF_04066">
    <property type="entry name" value="INFV_NS1"/>
    <property type="match status" value="1"/>
</dbReference>
<dbReference type="InterPro" id="IPR004208">
    <property type="entry name" value="NS1"/>
</dbReference>
<dbReference type="InterPro" id="IPR000256">
    <property type="entry name" value="NS1A"/>
</dbReference>
<dbReference type="InterPro" id="IPR038064">
    <property type="entry name" value="NS1A_effect_dom-like_sf"/>
</dbReference>
<dbReference type="InterPro" id="IPR009068">
    <property type="entry name" value="uS15_NS1_RNA-bd_sf"/>
</dbReference>
<dbReference type="Pfam" id="PF00600">
    <property type="entry name" value="Flu_NS1"/>
    <property type="match status" value="1"/>
</dbReference>
<dbReference type="SUPFAM" id="SSF143021">
    <property type="entry name" value="Ns1 effector domain-like"/>
    <property type="match status" value="1"/>
</dbReference>
<dbReference type="SUPFAM" id="SSF47060">
    <property type="entry name" value="S15/NS1 RNA-binding domain"/>
    <property type="match status" value="1"/>
</dbReference>
<organism>
    <name type="scientific">Influenza A virus (strain A/Turkey/Oregon/1971 H7N3)</name>
    <dbReference type="NCBI Taxonomy" id="385636"/>
    <lineage>
        <taxon>Viruses</taxon>
        <taxon>Riboviria</taxon>
        <taxon>Orthornavirae</taxon>
        <taxon>Negarnaviricota</taxon>
        <taxon>Polyploviricotina</taxon>
        <taxon>Insthoviricetes</taxon>
        <taxon>Articulavirales</taxon>
        <taxon>Orthomyxoviridae</taxon>
        <taxon>Alphainfluenzavirus</taxon>
        <taxon>Alphainfluenzavirus influenzae</taxon>
        <taxon>Influenza A virus</taxon>
    </lineage>
</organism>
<gene>
    <name evidence="1" type="primary">NS</name>
</gene>
<accession>P08276</accession>
<accession>Q6LC07</accession>
<comment type="function">
    <text evidence="1">Inhibits post-transcriptional processing of cellular pre-mRNA, by binding and inhibiting two cellular proteins that are required for the 3'-end processing of cellular pre-mRNAs: the 30 kDa cleavage and polyadenylation specificity factor/CPSF4 and the poly(A)-binding protein 2/PABPN1. In turn, unprocessed 3' end pre-mRNAs accumulate in the host nucleus and are no longer exported to the cytoplasm. Cellular protein synthesis is thereby shut off very early after virus infection. Viral protein synthesis is not affected by the inhibition of the cellular 3' end processing machinery because the poly(A) tails of viral mRNAs are produced by the viral polymerase through a stuttering mechanism. Prevents the establishment of the cellular antiviral state by inhibiting TRIM25-mediated RIGI ubiquitination, which normally triggers the antiviral transduction signal that leads to the activation of type I IFN genes by transcription factors IRF3 and IRF7. Also binds poly(A) and U6 snRNA. Inhibits the integrated stress response (ISR) in the infected cell by blocking dsRNA binding by EIF2AK2/PKR and further phosphorylation of EIF2S1/EIF-2ALPHA. Stress granule formation is thus inhibited, which allows protein synthesis and viral replication.</text>
</comment>
<comment type="subunit">
    <text evidence="1">Homodimer. Interacts with host TRIM25 (via coiled coil); this interaction specifically inhibits TRIM25 multimerization and TRIM25-mediated RIGI CARD ubiquitination. Interacts with human EIF2AK2/PKR, CPSF4, IVNS1ABP and PABPN1.</text>
</comment>
<comment type="subcellular location">
    <subcellularLocation>
        <location evidence="1">Host nucleus</location>
    </subcellularLocation>
    <subcellularLocation>
        <location evidence="1">Host cytoplasm</location>
    </subcellularLocation>
    <text evidence="1">In uninfected, transfected cells, NS1 is localized in the nucleus. Only in virus infected cells, the nuclear export signal is unveiled, presumably by a viral protein, and a fraction of NS1 is exported in the cytoplasm.</text>
</comment>
<comment type="alternative products">
    <event type="alternative splicing"/>
    <isoform>
        <id>P08276-1</id>
        <name>NS1</name>
        <sequence type="displayed"/>
    </isoform>
    <isoform>
        <id>P08277-1</id>
        <name>NEP</name>
        <name>NS2</name>
        <sequence type="external"/>
    </isoform>
</comment>
<comment type="domain">
    <text evidence="1">The dsRNA-binding region is required for suppression of RNA silencing.</text>
</comment>
<comment type="PTM">
    <text evidence="1">Upon interferon induction, ISGylated via host HERC5; this results in the impairment of NS1 interaction with RNA targets due to its inability to form homodimers and to interact with host EIF2AK2/PKR.</text>
</comment>
<comment type="similarity">
    <text evidence="1">Belongs to the influenza A viruses NS1 family.</text>
</comment>
<feature type="chain" id="PRO_0000078949" description="Non-structural protein 1">
    <location>
        <begin position="1"/>
        <end position="230"/>
    </location>
</feature>
<feature type="region of interest" description="RNA-binding and homodimerization" evidence="1">
    <location>
        <begin position="1"/>
        <end position="73"/>
    </location>
</feature>
<feature type="region of interest" description="CPSF4-binding" evidence="1">
    <location>
        <begin position="180"/>
        <end position="215"/>
    </location>
</feature>
<feature type="region of interest" description="Disordered" evidence="2">
    <location>
        <begin position="209"/>
        <end position="230"/>
    </location>
</feature>
<feature type="region of interest" description="PABPN1-binding" evidence="1">
    <location>
        <begin position="223"/>
        <end position="230"/>
    </location>
</feature>
<feature type="short sequence motif" description="Nuclear localization signal" evidence="1">
    <location>
        <begin position="34"/>
        <end position="38"/>
    </location>
</feature>
<feature type="short sequence motif" description="Nuclear export signal" evidence="1">
    <location>
        <begin position="137"/>
        <end position="146"/>
    </location>
</feature>